<reference key="1">
    <citation type="journal article" date="1989" name="Nucleic Acids Res.">
        <title>Cloning of cDNAs coding for human HMG I and HMG Y proteins: both are capable of binding to the octamer sequence motif.</title>
        <authorList>
            <person name="Eckner R."/>
            <person name="Birnstiel M.L."/>
        </authorList>
    </citation>
    <scope>NUCLEOTIDE SEQUENCE [MRNA] (ISOFORMS HMG-I AND HMG-Y)</scope>
</reference>
<reference key="2">
    <citation type="journal article" date="1989" name="Mol. Cell. Biol.">
        <title>Alternative processing of mRNAs encoding mammalian chromosomal high-mobility-group proteins HMG-I and HMG-Y.</title>
        <authorList>
            <person name="Johnson K.R."/>
            <person name="Lehn D.A."/>
            <person name="Reeves R."/>
        </authorList>
    </citation>
    <scope>NUCLEOTIDE SEQUENCE [MRNA] (ISOFORMS HMG-I AND HMG-Y)</scope>
</reference>
<reference key="3">
    <citation type="journal article" date="1993" name="Nucleic Acids Res.">
        <title>Organization, inducible-expression and chromosome localization of the human HMG-I(Y) nonhistone protein gene.</title>
        <authorList>
            <person name="Friedmann M."/>
            <person name="Holth L.T."/>
            <person name="Zoghbi H.Y."/>
            <person name="Reeves R."/>
        </authorList>
    </citation>
    <scope>NUCLEOTIDE SEQUENCE [GENOMIC DNA]</scope>
    <source>
        <tissue>Placenta</tissue>
    </source>
</reference>
<reference key="4">
    <citation type="journal article" date="1999" name="J. Biol. Chem.">
        <title>Retinoid-dependent recruitment of a histone H1 displacement activity by retinoic acid receptor.</title>
        <authorList>
            <person name="Nagpal S."/>
            <person name="Ghosn C."/>
            <person name="DiSepio D."/>
            <person name="Molina Y."/>
            <person name="Sutter M."/>
            <person name="Klein E.S."/>
            <person name="Chandraratna R.A.S."/>
        </authorList>
    </citation>
    <scope>NUCLEOTIDE SEQUENCE [MRNA] (ISOFORM HMG-R)</scope>
</reference>
<reference key="5">
    <citation type="journal article" date="2003" name="Nature">
        <title>The DNA sequence and analysis of human chromosome 6.</title>
        <authorList>
            <person name="Mungall A.J."/>
            <person name="Palmer S.A."/>
            <person name="Sims S.K."/>
            <person name="Edwards C.A."/>
            <person name="Ashurst J.L."/>
            <person name="Wilming L."/>
            <person name="Jones M.C."/>
            <person name="Horton R."/>
            <person name="Hunt S.E."/>
            <person name="Scott C.E."/>
            <person name="Gilbert J.G.R."/>
            <person name="Clamp M.E."/>
            <person name="Bethel G."/>
            <person name="Milne S."/>
            <person name="Ainscough R."/>
            <person name="Almeida J.P."/>
            <person name="Ambrose K.D."/>
            <person name="Andrews T.D."/>
            <person name="Ashwell R.I.S."/>
            <person name="Babbage A.K."/>
            <person name="Bagguley C.L."/>
            <person name="Bailey J."/>
            <person name="Banerjee R."/>
            <person name="Barker D.J."/>
            <person name="Barlow K.F."/>
            <person name="Bates K."/>
            <person name="Beare D.M."/>
            <person name="Beasley H."/>
            <person name="Beasley O."/>
            <person name="Bird C.P."/>
            <person name="Blakey S.E."/>
            <person name="Bray-Allen S."/>
            <person name="Brook J."/>
            <person name="Brown A.J."/>
            <person name="Brown J.Y."/>
            <person name="Burford D.C."/>
            <person name="Burrill W."/>
            <person name="Burton J."/>
            <person name="Carder C."/>
            <person name="Carter N.P."/>
            <person name="Chapman J.C."/>
            <person name="Clark S.Y."/>
            <person name="Clark G."/>
            <person name="Clee C.M."/>
            <person name="Clegg S."/>
            <person name="Cobley V."/>
            <person name="Collier R.E."/>
            <person name="Collins J.E."/>
            <person name="Colman L.K."/>
            <person name="Corby N.R."/>
            <person name="Coville G.J."/>
            <person name="Culley K.M."/>
            <person name="Dhami P."/>
            <person name="Davies J."/>
            <person name="Dunn M."/>
            <person name="Earthrowl M.E."/>
            <person name="Ellington A.E."/>
            <person name="Evans K.A."/>
            <person name="Faulkner L."/>
            <person name="Francis M.D."/>
            <person name="Frankish A."/>
            <person name="Frankland J."/>
            <person name="French L."/>
            <person name="Garner P."/>
            <person name="Garnett J."/>
            <person name="Ghori M.J."/>
            <person name="Gilby L.M."/>
            <person name="Gillson C.J."/>
            <person name="Glithero R.J."/>
            <person name="Grafham D.V."/>
            <person name="Grant M."/>
            <person name="Gribble S."/>
            <person name="Griffiths C."/>
            <person name="Griffiths M.N.D."/>
            <person name="Hall R."/>
            <person name="Halls K.S."/>
            <person name="Hammond S."/>
            <person name="Harley J.L."/>
            <person name="Hart E.A."/>
            <person name="Heath P.D."/>
            <person name="Heathcott R."/>
            <person name="Holmes S.J."/>
            <person name="Howden P.J."/>
            <person name="Howe K.L."/>
            <person name="Howell G.R."/>
            <person name="Huckle E."/>
            <person name="Humphray S.J."/>
            <person name="Humphries M.D."/>
            <person name="Hunt A.R."/>
            <person name="Johnson C.M."/>
            <person name="Joy A.A."/>
            <person name="Kay M."/>
            <person name="Keenan S.J."/>
            <person name="Kimberley A.M."/>
            <person name="King A."/>
            <person name="Laird G.K."/>
            <person name="Langford C."/>
            <person name="Lawlor S."/>
            <person name="Leongamornlert D.A."/>
            <person name="Leversha M."/>
            <person name="Lloyd C.R."/>
            <person name="Lloyd D.M."/>
            <person name="Loveland J.E."/>
            <person name="Lovell J."/>
            <person name="Martin S."/>
            <person name="Mashreghi-Mohammadi M."/>
            <person name="Maslen G.L."/>
            <person name="Matthews L."/>
            <person name="McCann O.T."/>
            <person name="McLaren S.J."/>
            <person name="McLay K."/>
            <person name="McMurray A."/>
            <person name="Moore M.J.F."/>
            <person name="Mullikin J.C."/>
            <person name="Niblett D."/>
            <person name="Nickerson T."/>
            <person name="Novik K.L."/>
            <person name="Oliver K."/>
            <person name="Overton-Larty E.K."/>
            <person name="Parker A."/>
            <person name="Patel R."/>
            <person name="Pearce A.V."/>
            <person name="Peck A.I."/>
            <person name="Phillimore B.J.C.T."/>
            <person name="Phillips S."/>
            <person name="Plumb R.W."/>
            <person name="Porter K.M."/>
            <person name="Ramsey Y."/>
            <person name="Ranby S.A."/>
            <person name="Rice C.M."/>
            <person name="Ross M.T."/>
            <person name="Searle S.M."/>
            <person name="Sehra H.K."/>
            <person name="Sheridan E."/>
            <person name="Skuce C.D."/>
            <person name="Smith S."/>
            <person name="Smith M."/>
            <person name="Spraggon L."/>
            <person name="Squares S.L."/>
            <person name="Steward C.A."/>
            <person name="Sycamore N."/>
            <person name="Tamlyn-Hall G."/>
            <person name="Tester J."/>
            <person name="Theaker A.J."/>
            <person name="Thomas D.W."/>
            <person name="Thorpe A."/>
            <person name="Tracey A."/>
            <person name="Tromans A."/>
            <person name="Tubby B."/>
            <person name="Wall M."/>
            <person name="Wallis J.M."/>
            <person name="West A.P."/>
            <person name="White S.S."/>
            <person name="Whitehead S.L."/>
            <person name="Whittaker H."/>
            <person name="Wild A."/>
            <person name="Willey D.J."/>
            <person name="Wilmer T.E."/>
            <person name="Wood J.M."/>
            <person name="Wray P.W."/>
            <person name="Wyatt J.C."/>
            <person name="Young L."/>
            <person name="Younger R.M."/>
            <person name="Bentley D.R."/>
            <person name="Coulson A."/>
            <person name="Durbin R.M."/>
            <person name="Hubbard T."/>
            <person name="Sulston J.E."/>
            <person name="Dunham I."/>
            <person name="Rogers J."/>
            <person name="Beck S."/>
        </authorList>
    </citation>
    <scope>NUCLEOTIDE SEQUENCE [LARGE SCALE GENOMIC DNA]</scope>
</reference>
<reference key="6">
    <citation type="journal article" date="2004" name="Genome Res.">
        <title>The status, quality, and expansion of the NIH full-length cDNA project: the Mammalian Gene Collection (MGC).</title>
        <authorList>
            <consortium name="The MGC Project Team"/>
        </authorList>
    </citation>
    <scope>NUCLEOTIDE SEQUENCE [LARGE SCALE MRNA] (ISOFORMS HMG-I AND HMG-Y)</scope>
    <source>
        <tissue>B-cell</tissue>
        <tissue>Mammary gland</tissue>
        <tissue>Muscle</tissue>
        <tissue>Pancreas</tissue>
        <tissue>Uterus</tissue>
    </source>
</reference>
<reference key="7">
    <citation type="journal article" date="1987" name="Biochem. Biophys. Res. Commun.">
        <title>The human chromosomal protein HMG I contains two identical palindrome amino acid sequences.</title>
        <authorList>
            <person name="Lund T."/>
            <person name="Dahl K.H."/>
            <person name="Mork E."/>
            <person name="Holtlund J."/>
            <person name="Laland S.G."/>
        </authorList>
    </citation>
    <scope>PROTEIN SEQUENCE OF 4-107 (HMG-I)</scope>
</reference>
<reference key="8">
    <citation type="journal article" date="1989" name="Biochem. Biophys. Res. Commun.">
        <title>The amino acid sequence of the chromosomal protein HMG-Y, its relation to HMG-I and possible domains for the preferential binding of the proteins to stretches of A-T base pairs.</title>
        <authorList>
            <person name="Karlson J.R."/>
            <person name="Mork E."/>
            <person name="Holtlund J."/>
            <person name="Laland S.G."/>
            <person name="Lund T."/>
        </authorList>
    </citation>
    <scope>PROTEIN SEQUENCE OF 4-107 (HMG-Y)</scope>
</reference>
<reference key="9">
    <citation type="journal article" date="1990" name="J. Biol. Chem.">
        <title>The A.T-DNA-binding domain of mammalian high mobility group I chromosomal proteins. A novel peptide motif for recognizing DNA structure.</title>
        <authorList>
            <person name="Reeves R."/>
            <person name="Nissen M.S."/>
        </authorList>
    </citation>
    <scope>DNA-BINDING DOMAINS</scope>
</reference>
<reference key="10">
    <citation type="journal article" date="2001" name="Cytogenet. Cell Genet.">
        <title>Intragenic breakpoint within RAD51L1 in a t(6;14)(p21.3;q24) of a pulmonary chondroid hamartoma.</title>
        <authorList>
            <person name="Blank C."/>
            <person name="Schoenmakers E.F.P.M."/>
            <person name="Rogalla P."/>
            <person name="Huys E.H."/>
            <person name="van Rijk A.A."/>
            <person name="Drieschner N."/>
            <person name="Bullerdiek J."/>
        </authorList>
    </citation>
    <scope>CHROMOSOMAL TRANSLOCATION WITH RAD51B</scope>
</reference>
<reference key="11">
    <citation type="journal article" date="2003" name="Biochemistry">
        <title>During apoptosis of tumor cells HMGA1a protein undergoes methylation: identification of the modification site by mass spectrometry.</title>
        <authorList>
            <person name="Sgarra R."/>
            <person name="Diana F."/>
            <person name="Bellarosa C."/>
            <person name="Dekleva V."/>
            <person name="Rustighi A."/>
            <person name="Toller M."/>
            <person name="Manfioletti G."/>
            <person name="Giancotti V."/>
        </authorList>
    </citation>
    <scope>PHOSPHORYLATION</scope>
    <scope>METHYLATION AT ARG-26</scope>
    <scope>IDENTIFICATION BY MASS SPECTROMETRY</scope>
</reference>
<reference key="12">
    <citation type="journal article" date="2005" name="Biochem. Biophys. Res. Commun.">
        <title>Protein arginine methyltransferase 6 specifically methylates the nonhistone chromatin protein HMGA1a.</title>
        <authorList>
            <person name="Miranda T.B."/>
            <person name="Webb K.J."/>
            <person name="Edberg D.D."/>
            <person name="Reeves R."/>
            <person name="Clarke S."/>
        </authorList>
    </citation>
    <scope>METHYLATION BY PRMT6</scope>
</reference>
<reference key="13">
    <citation type="journal article" date="2005" name="Biochemistry">
        <title>Tandem mass spectrometry for the examination of the posttranslational modifications of high-mobility group A1 proteins: symmetric and asymmetric dimethylation of Arg25 in HMGA1a protein.</title>
        <authorList>
            <person name="Zou Y."/>
            <person name="Wang Y."/>
        </authorList>
    </citation>
    <scope>PHOSPHORYLATION AT SER-99; SER-102 AND SER-103</scope>
    <scope>METHYLATION AT ARG-26</scope>
    <scope>MASS SPECTROMETRY</scope>
</reference>
<reference key="14">
    <citation type="journal article" date="2005" name="J. Biol. Chem.">
        <title>Dynamics of human protein arginine methyltransferase 1(PRMT1) in vivo.</title>
        <authorList>
            <person name="Herrmann F."/>
            <person name="Lee J."/>
            <person name="Bedford M.T."/>
            <person name="Fackelmayer F.O."/>
        </authorList>
    </citation>
    <scope>METHYLATION AT ARG-58 AND ARG-60 BY PRMT6</scope>
    <scope>MUTAGENESIS OF ARG-26; ARG-58 AND ARG-60</scope>
</reference>
<reference key="15">
    <citation type="journal article" date="2006" name="Cell">
        <title>Global, in vivo, and site-specific phosphorylation dynamics in signaling networks.</title>
        <authorList>
            <person name="Olsen J.V."/>
            <person name="Blagoev B."/>
            <person name="Gnad F."/>
            <person name="Macek B."/>
            <person name="Kumar C."/>
            <person name="Mortensen P."/>
            <person name="Mann M."/>
        </authorList>
    </citation>
    <scope>PHOSPHORYLATION [LARGE SCALE ANALYSIS] AT SER-36; SER-99; SER-102 AND SER-103</scope>
    <scope>IDENTIFICATION BY MASS SPECTROMETRY [LARGE SCALE ANALYSIS]</scope>
    <source>
        <tissue>Cervix carcinoma</tissue>
    </source>
</reference>
<reference key="16">
    <citation type="journal article" date="2007" name="J. Proteome Res.">
        <title>Improved titanium dioxide enrichment of phosphopeptides from HeLa cells and high confident phosphopeptide identification by cross-validation of MS/MS and MS/MS/MS spectra.</title>
        <authorList>
            <person name="Yu L.R."/>
            <person name="Zhu Z."/>
            <person name="Chan K.C."/>
            <person name="Issaq H.J."/>
            <person name="Dimitrov D.S."/>
            <person name="Veenstra T.D."/>
        </authorList>
    </citation>
    <scope>PHOSPHORYLATION [LARGE SCALE ANALYSIS] AT SER-36 AND THR-53</scope>
    <scope>PHOSPHORYLATION [LARGE SCALE ANALYSIS] AT THR-42 (ISOFORM HMG-Y)</scope>
    <scope>IDENTIFICATION BY MASS SPECTROMETRY [LARGE SCALE ANALYSIS]</scope>
    <source>
        <tissue>Cervix carcinoma</tissue>
    </source>
</reference>
<reference key="17">
    <citation type="journal article" date="2007" name="J. Proteome Res.">
        <title>Homeodomain-interacting protein kinase-2 (HIPK2) phosphorylates HMGA1a at Ser-35, Thr-52, and Thr-77 and modulates its DNA binding affinity.</title>
        <authorList>
            <person name="Zhang Q."/>
            <person name="Wang Y."/>
        </authorList>
    </citation>
    <scope>PHOSPHORYLATION AT SER-36; THR-53 AND THR-78 BY HIPK2 AND CDK1/CDC2 (ISOFORM HMG-I)</scope>
    <scope>PHOSPHORYLATION AT THR-42 AND THR-67 BY HIPK2 AND CDK1/CDC2 (ISOFORM HMG-Y)</scope>
</reference>
<reference key="18">
    <citation type="journal article" date="2007" name="Science">
        <title>ATM and ATR substrate analysis reveals extensive protein networks responsive to DNA damage.</title>
        <authorList>
            <person name="Matsuoka S."/>
            <person name="Ballif B.A."/>
            <person name="Smogorzewska A."/>
            <person name="McDonald E.R. III"/>
            <person name="Hurov K.E."/>
            <person name="Luo J."/>
            <person name="Bakalarski C.E."/>
            <person name="Zhao Z."/>
            <person name="Solimini N."/>
            <person name="Lerenthal Y."/>
            <person name="Shiloh Y."/>
            <person name="Gygi S.P."/>
            <person name="Elledge S.J."/>
        </authorList>
    </citation>
    <scope>PHOSPHORYLATION [LARGE SCALE ANALYSIS] AT SER-99; SER-102 AND SER-103</scope>
    <scope>IDENTIFICATION BY MASS SPECTROMETRY [LARGE SCALE ANALYSIS]</scope>
    <source>
        <tissue>Embryonic kidney</tissue>
    </source>
</reference>
<reference key="19">
    <citation type="journal article" date="2008" name="J. Proteome Res.">
        <title>Phosphorylation analysis of primary human T lymphocytes using sequential IMAC and titanium oxide enrichment.</title>
        <authorList>
            <person name="Carrascal M."/>
            <person name="Ovelleiro D."/>
            <person name="Casas V."/>
            <person name="Gay M."/>
            <person name="Abian J."/>
        </authorList>
    </citation>
    <scope>IDENTIFICATION BY MASS SPECTROMETRY [LARGE SCALE ANALYSIS]</scope>
    <source>
        <tissue>T-cell</tissue>
    </source>
</reference>
<reference key="20">
    <citation type="journal article" date="2008" name="Proc. Natl. Acad. Sci. U.S.A.">
        <title>A quantitative atlas of mitotic phosphorylation.</title>
        <authorList>
            <person name="Dephoure N."/>
            <person name="Zhou C."/>
            <person name="Villen J."/>
            <person name="Beausoleil S.A."/>
            <person name="Bakalarski C.E."/>
            <person name="Elledge S.J."/>
            <person name="Gygi S.P."/>
        </authorList>
    </citation>
    <scope>PHOSPHORYLATION [LARGE SCALE ANALYSIS] AT SER-36; THR-39; SER-44; SER-49 AND THR-53</scope>
    <scope>IDENTIFICATION BY MASS SPECTROMETRY [LARGE SCALE ANALYSIS]</scope>
    <source>
        <tissue>Cervix carcinoma</tissue>
    </source>
</reference>
<reference key="21">
    <citation type="journal article" date="2008" name="Proteomics">
        <title>Large-scale phosphoproteome analysis of human liver tissue by enrichment and fractionation of phosphopeptides with strong anion exchange chromatography.</title>
        <authorList>
            <person name="Han G."/>
            <person name="Ye M."/>
            <person name="Zhou H."/>
            <person name="Jiang X."/>
            <person name="Feng S."/>
            <person name="Jiang X."/>
            <person name="Tian R."/>
            <person name="Wan D."/>
            <person name="Zou H."/>
            <person name="Gu J."/>
        </authorList>
    </citation>
    <scope>IDENTIFICATION BY MASS SPECTROMETRY [LARGE SCALE ANALYSIS]</scope>
    <source>
        <tissue>Liver</tissue>
    </source>
</reference>
<reference key="22">
    <citation type="journal article" date="2009" name="Anal. Chem.">
        <title>Lys-N and trypsin cover complementary parts of the phosphoproteome in a refined SCX-based approach.</title>
        <authorList>
            <person name="Gauci S."/>
            <person name="Helbig A.O."/>
            <person name="Slijper M."/>
            <person name="Krijgsveld J."/>
            <person name="Heck A.J."/>
            <person name="Mohammed S."/>
        </authorList>
    </citation>
    <scope>IDENTIFICATION BY MASS SPECTROMETRY [LARGE SCALE ANALYSIS]</scope>
</reference>
<reference key="23">
    <citation type="journal article" date="2009" name="Sci. Signal.">
        <title>Quantitative phosphoproteomic analysis of T cell receptor signaling reveals system-wide modulation of protein-protein interactions.</title>
        <authorList>
            <person name="Mayya V."/>
            <person name="Lundgren D.H."/>
            <person name="Hwang S.-I."/>
            <person name="Rezaul K."/>
            <person name="Wu L."/>
            <person name="Eng J.K."/>
            <person name="Rodionov V."/>
            <person name="Han D.K."/>
        </authorList>
    </citation>
    <scope>PHOSPHORYLATION [LARGE SCALE ANALYSIS] AT SER-99; SER-102 AND SER-103</scope>
    <scope>IDENTIFICATION BY MASS SPECTROMETRY [LARGE SCALE ANALYSIS]</scope>
    <source>
        <tissue>Leukemic T-cell</tissue>
    </source>
</reference>
<reference key="24">
    <citation type="journal article" date="2009" name="Science">
        <title>Lysine acetylation targets protein complexes and co-regulates major cellular functions.</title>
        <authorList>
            <person name="Choudhary C."/>
            <person name="Kumar C."/>
            <person name="Gnad F."/>
            <person name="Nielsen M.L."/>
            <person name="Rehman M."/>
            <person name="Walther T.C."/>
            <person name="Olsen J.V."/>
            <person name="Mann M."/>
        </authorList>
    </citation>
    <scope>ACETYLATION [LARGE SCALE ANALYSIS] AT LYS-15</scope>
    <scope>IDENTIFICATION BY MASS SPECTROMETRY [LARGE SCALE ANALYSIS]</scope>
</reference>
<reference key="25">
    <citation type="journal article" date="2010" name="Sci. Signal.">
        <title>Quantitative phosphoproteomics reveals widespread full phosphorylation site occupancy during mitosis.</title>
        <authorList>
            <person name="Olsen J.V."/>
            <person name="Vermeulen M."/>
            <person name="Santamaria A."/>
            <person name="Kumar C."/>
            <person name="Miller M.L."/>
            <person name="Jensen L.J."/>
            <person name="Gnad F."/>
            <person name="Cox J."/>
            <person name="Jensen T.S."/>
            <person name="Nigg E.A."/>
            <person name="Brunak S."/>
            <person name="Mann M."/>
        </authorList>
    </citation>
    <scope>PHOSPHORYLATION [LARGE SCALE ANALYSIS] AT SER-36; THR-53; SER-99; SER-102 AND SER-103</scope>
    <scope>IDENTIFICATION BY MASS SPECTROMETRY [LARGE SCALE ANALYSIS]</scope>
    <source>
        <tissue>Cervix carcinoma</tissue>
    </source>
</reference>
<reference key="26">
    <citation type="journal article" date="2011" name="BMC Syst. Biol.">
        <title>Initial characterization of the human central proteome.</title>
        <authorList>
            <person name="Burkard T.R."/>
            <person name="Planyavsky M."/>
            <person name="Kaupe I."/>
            <person name="Breitwieser F.P."/>
            <person name="Buerckstuemmer T."/>
            <person name="Bennett K.L."/>
            <person name="Superti-Furga G."/>
            <person name="Colinge J."/>
        </authorList>
    </citation>
    <scope>IDENTIFICATION BY MASS SPECTROMETRY [LARGE SCALE ANALYSIS]</scope>
</reference>
<reference key="27">
    <citation type="journal article" date="2011" name="Sci. Signal.">
        <title>System-wide temporal characterization of the proteome and phosphoproteome of human embryonic stem cell differentiation.</title>
        <authorList>
            <person name="Rigbolt K.T."/>
            <person name="Prokhorova T.A."/>
            <person name="Akimov V."/>
            <person name="Henningsen J."/>
            <person name="Johansen P.T."/>
            <person name="Kratchmarova I."/>
            <person name="Kassem M."/>
            <person name="Mann M."/>
            <person name="Olsen J.V."/>
            <person name="Blagoev B."/>
        </authorList>
    </citation>
    <scope>PHOSPHORYLATION [LARGE SCALE ANALYSIS] AT SER-36; THR-53; SER-99 AND SER-102</scope>
    <scope>PHOSPHORYLATION [LARGE SCALE ANALYSIS] AT THR-42 (ISOFORM HMG-Y)</scope>
    <scope>IDENTIFICATION BY MASS SPECTROMETRY [LARGE SCALE ANALYSIS]</scope>
</reference>
<reference key="28">
    <citation type="journal article" date="2012" name="Proc. Natl. Acad. Sci. U.S.A.">
        <title>N-terminal acetylome analyses and functional insights of the N-terminal acetyltransferase NatB.</title>
        <authorList>
            <person name="Van Damme P."/>
            <person name="Lasa M."/>
            <person name="Polevoda B."/>
            <person name="Gazquez C."/>
            <person name="Elosegui-Artola A."/>
            <person name="Kim D.S."/>
            <person name="De Juan-Pardo E."/>
            <person name="Demeyer K."/>
            <person name="Hole K."/>
            <person name="Larrea E."/>
            <person name="Timmerman E."/>
            <person name="Prieto J."/>
            <person name="Arnesen T."/>
            <person name="Sherman F."/>
            <person name="Gevaert K."/>
            <person name="Aldabe R."/>
        </authorList>
    </citation>
    <scope>IDENTIFICATION BY MASS SPECTROMETRY [LARGE SCALE ANALYSIS]</scope>
</reference>
<reference key="29">
    <citation type="journal article" date="2013" name="J. Proteome Res.">
        <title>Toward a comprehensive characterization of a human cancer cell phosphoproteome.</title>
        <authorList>
            <person name="Zhou H."/>
            <person name="Di Palma S."/>
            <person name="Preisinger C."/>
            <person name="Peng M."/>
            <person name="Polat A.N."/>
            <person name="Heck A.J."/>
            <person name="Mohammed S."/>
        </authorList>
    </citation>
    <scope>PHOSPHORYLATION [LARGE SCALE ANALYSIS] AT SER-9; SER-36; SER-44; THR-53; SER-99; SER-102 AND SER-103</scope>
    <scope>IDENTIFICATION BY MASS SPECTROMETRY [LARGE SCALE ANALYSIS]</scope>
    <source>
        <tissue>Cervix carcinoma</tissue>
        <tissue>Erythroleukemia</tissue>
    </source>
</reference>
<reference key="30">
    <citation type="journal article" date="2014" name="J. Proteomics">
        <title>An enzyme assisted RP-RPLC approach for in-depth analysis of human liver phosphoproteome.</title>
        <authorList>
            <person name="Bian Y."/>
            <person name="Song C."/>
            <person name="Cheng K."/>
            <person name="Dong M."/>
            <person name="Wang F."/>
            <person name="Huang J."/>
            <person name="Sun D."/>
            <person name="Wang L."/>
            <person name="Ye M."/>
            <person name="Zou H."/>
        </authorList>
    </citation>
    <scope>PHOSPHORYLATION [LARGE SCALE ANALYSIS] AT SER-36; THR-39; SER-44 AND SER-49</scope>
    <scope>IDENTIFICATION BY MASS SPECTROMETRY [LARGE SCALE ANALYSIS]</scope>
    <source>
        <tissue>Liver</tissue>
    </source>
</reference>
<reference key="31">
    <citation type="journal article" date="2015" name="Proteomics">
        <title>N-terminome analysis of the human mitochondrial proteome.</title>
        <authorList>
            <person name="Vaca Jacome A.S."/>
            <person name="Rabilloud T."/>
            <person name="Schaeffer-Reiss C."/>
            <person name="Rompais M."/>
            <person name="Ayoub D."/>
            <person name="Lane L."/>
            <person name="Bairoch A."/>
            <person name="Van Dorsselaer A."/>
            <person name="Carapito C."/>
        </authorList>
    </citation>
    <scope>IDENTIFICATION BY MASS SPECTROMETRY [LARGE SCALE ANALYSIS]</scope>
</reference>
<reference key="32">
    <citation type="journal article" date="2017" name="Mol. Cell">
        <title>Serine ADP-ribosylation depends on HPF1.</title>
        <authorList>
            <person name="Bonfiglio J.J."/>
            <person name="Fontana P."/>
            <person name="Zhang Q."/>
            <person name="Colby T."/>
            <person name="Gibbs-Seymour I."/>
            <person name="Atanassov I."/>
            <person name="Bartlett E."/>
            <person name="Zaja R."/>
            <person name="Ahel I."/>
            <person name="Matic I."/>
        </authorList>
    </citation>
    <scope>ADP-RIBOSYLATION AT SER-8 AND SER-9</scope>
</reference>
<reference key="33">
    <citation type="journal article" date="2017" name="Nat. Struct. Mol. Biol.">
        <title>Site-specific mapping of the human SUMO proteome reveals co-modification with phosphorylation.</title>
        <authorList>
            <person name="Hendriks I.A."/>
            <person name="Lyon D."/>
            <person name="Young C."/>
            <person name="Jensen L.J."/>
            <person name="Vertegaal A.C."/>
            <person name="Nielsen M.L."/>
        </authorList>
    </citation>
    <scope>SUMOYLATION [LARGE SCALE ANALYSIS] AT LYS-15</scope>
    <scope>IDENTIFICATION BY MASS SPECTROMETRY [LARGE SCALE ANALYSIS]</scope>
</reference>
<reference key="34">
    <citation type="journal article" date="1997" name="Nat. Struct. Biol.">
        <title>The solution structure of an HMG-I(Y)-DNA complex defines a new architectural minor groove binding motif.</title>
        <authorList>
            <person name="Huth J.R."/>
            <person name="Bewley C.A."/>
            <person name="Nissen M.S."/>
            <person name="Evans J.N."/>
            <person name="Reeves R."/>
            <person name="Gronenborn A.M."/>
            <person name="Clore G.M."/>
        </authorList>
    </citation>
    <scope>STRUCTURE BY NMR OF 51-75 AND 80-89</scope>
</reference>
<evidence type="ECO:0000250" key="1"/>
<evidence type="ECO:0000250" key="2">
    <source>
        <dbReference type="UniProtKB" id="P17095"/>
    </source>
</evidence>
<evidence type="ECO:0000256" key="3">
    <source>
        <dbReference type="SAM" id="MobiDB-lite"/>
    </source>
</evidence>
<evidence type="ECO:0000269" key="4">
    <source>
    </source>
</evidence>
<evidence type="ECO:0000269" key="5">
    <source>
    </source>
</evidence>
<evidence type="ECO:0000269" key="6">
    <source>
    </source>
</evidence>
<evidence type="ECO:0000269" key="7">
    <source>
    </source>
</evidence>
<evidence type="ECO:0000269" key="8">
    <source>
    </source>
</evidence>
<evidence type="ECO:0000269" key="9">
    <source>
    </source>
</evidence>
<evidence type="ECO:0000303" key="10">
    <source>
    </source>
</evidence>
<evidence type="ECO:0000303" key="11">
    <source>
    </source>
</evidence>
<evidence type="ECO:0000303" key="12">
    <source>
    </source>
</evidence>
<evidence type="ECO:0000303" key="13">
    <source>
    </source>
</evidence>
<evidence type="ECO:0000305" key="14"/>
<evidence type="ECO:0007744" key="15">
    <source>
    </source>
</evidence>
<evidence type="ECO:0007744" key="16">
    <source>
    </source>
</evidence>
<evidence type="ECO:0007744" key="17">
    <source>
    </source>
</evidence>
<evidence type="ECO:0007744" key="18">
    <source>
    </source>
</evidence>
<evidence type="ECO:0007744" key="19">
    <source>
    </source>
</evidence>
<evidence type="ECO:0007744" key="20">
    <source>
    </source>
</evidence>
<evidence type="ECO:0007744" key="21">
    <source>
    </source>
</evidence>
<evidence type="ECO:0007744" key="22">
    <source>
    </source>
</evidence>
<evidence type="ECO:0007744" key="23">
    <source>
    </source>
</evidence>
<evidence type="ECO:0007744" key="24">
    <source>
    </source>
</evidence>
<evidence type="ECO:0007744" key="25">
    <source>
    </source>
</evidence>
<evidence type="ECO:0007829" key="26">
    <source>
        <dbReference type="PDB" id="2EZE"/>
    </source>
</evidence>
<gene>
    <name type="primary">HMGA1</name>
    <name type="synonym">HMGIY</name>
</gene>
<organism>
    <name type="scientific">Homo sapiens</name>
    <name type="common">Human</name>
    <dbReference type="NCBI Taxonomy" id="9606"/>
    <lineage>
        <taxon>Eukaryota</taxon>
        <taxon>Metazoa</taxon>
        <taxon>Chordata</taxon>
        <taxon>Craniata</taxon>
        <taxon>Vertebrata</taxon>
        <taxon>Euteleostomi</taxon>
        <taxon>Mammalia</taxon>
        <taxon>Eutheria</taxon>
        <taxon>Euarchontoglires</taxon>
        <taxon>Primates</taxon>
        <taxon>Haplorrhini</taxon>
        <taxon>Catarrhini</taxon>
        <taxon>Hominidae</taxon>
        <taxon>Homo</taxon>
    </lineage>
</organism>
<keyword id="KW-0002">3D-structure</keyword>
<keyword id="KW-0007">Acetylation</keyword>
<keyword id="KW-0013">ADP-ribosylation</keyword>
<keyword id="KW-0025">Alternative splicing</keyword>
<keyword id="KW-0160">Chromosomal rearrangement</keyword>
<keyword id="KW-0158">Chromosome</keyword>
<keyword id="KW-0903">Direct protein sequencing</keyword>
<keyword id="KW-0238">DNA-binding</keyword>
<keyword id="KW-1017">Isopeptide bond</keyword>
<keyword id="KW-0488">Methylation</keyword>
<keyword id="KW-0539">Nucleus</keyword>
<keyword id="KW-0597">Phosphoprotein</keyword>
<keyword id="KW-1267">Proteomics identification</keyword>
<keyword id="KW-1185">Reference proteome</keyword>
<keyword id="KW-0677">Repeat</keyword>
<keyword id="KW-0804">Transcription</keyword>
<keyword id="KW-0805">Transcription regulation</keyword>
<keyword id="KW-0832">Ubl conjugation</keyword>
<proteinExistence type="evidence at protein level"/>
<protein>
    <recommendedName>
        <fullName>High mobility group protein HMG-I/HMG-Y</fullName>
        <shortName>HMG-I(Y)</shortName>
    </recommendedName>
    <alternativeName>
        <fullName>High mobility group AT-hook protein 1</fullName>
        <shortName>High mobility group protein A1</shortName>
    </alternativeName>
    <alternativeName>
        <fullName>High mobility group protein R</fullName>
    </alternativeName>
</protein>
<feature type="initiator methionine" description="Removed" evidence="2">
    <location>
        <position position="1"/>
    </location>
</feature>
<feature type="chain" id="PRO_0000206708" description="High mobility group protein HMG-I/HMG-Y">
    <location>
        <begin position="2"/>
        <end position="107"/>
    </location>
</feature>
<feature type="DNA-binding region" description="A.T hook 1">
    <location>
        <begin position="21"/>
        <end position="31"/>
    </location>
</feature>
<feature type="DNA-binding region" description="A.T hook 2">
    <location>
        <begin position="53"/>
        <end position="63"/>
    </location>
</feature>
<feature type="DNA-binding region" description="A.T hook 3">
    <location>
        <begin position="78"/>
        <end position="89"/>
    </location>
</feature>
<feature type="region of interest" description="Disordered" evidence="3">
    <location>
        <begin position="1"/>
        <end position="107"/>
    </location>
</feature>
<feature type="region of interest" description="Interaction with HIPK2" evidence="1">
    <location>
        <begin position="53"/>
        <end position="77"/>
    </location>
</feature>
<feature type="compositionally biased region" description="Basic and acidic residues" evidence="3">
    <location>
        <begin position="15"/>
        <end position="24"/>
    </location>
</feature>
<feature type="compositionally biased region" description="Basic residues" evidence="3">
    <location>
        <begin position="55"/>
        <end position="74"/>
    </location>
</feature>
<feature type="compositionally biased region" description="Acidic residues" evidence="3">
    <location>
        <begin position="93"/>
        <end position="107"/>
    </location>
</feature>
<feature type="modified residue" description="N-acetylserine" evidence="2">
    <location>
        <position position="2"/>
    </location>
</feature>
<feature type="modified residue" description="N6-acetyllysine" evidence="2">
    <location>
        <position position="7"/>
    </location>
</feature>
<feature type="modified residue" description="ADP-ribosylserine" evidence="9">
    <location>
        <position position="8"/>
    </location>
</feature>
<feature type="modified residue" description="ADP-ribosylserine; alternate" evidence="9">
    <location>
        <position position="9"/>
    </location>
</feature>
<feature type="modified residue" description="Phosphoserine; alternate" evidence="23">
    <location>
        <position position="9"/>
    </location>
</feature>
<feature type="modified residue" description="N6-acetyllysine; alternate" evidence="19">
    <location>
        <position position="15"/>
    </location>
</feature>
<feature type="modified residue" description="Asymmetric dimethylarginine; alternate" evidence="5 6">
    <location>
        <position position="26"/>
    </location>
</feature>
<feature type="modified residue" description="Omega-N-methylarginine; alternate" evidence="5 6">
    <location>
        <position position="26"/>
    </location>
</feature>
<feature type="modified residue" description="Symmetric dimethylarginine; alternate" evidence="5 6">
    <location>
        <position position="26"/>
    </location>
</feature>
<feature type="modified residue" description="Phosphoserine; by HIPK2 and CDC2" evidence="15 17 18 21 22 23 24">
    <location>
        <position position="36"/>
    </location>
</feature>
<feature type="modified residue" description="Phosphothreonine" evidence="18 24">
    <location>
        <position position="39"/>
    </location>
</feature>
<feature type="modified residue" description="Phosphoserine" evidence="18 23 24">
    <location>
        <position position="44"/>
    </location>
</feature>
<feature type="modified residue" description="Phosphoserine" evidence="18 24">
    <location>
        <position position="49"/>
    </location>
</feature>
<feature type="modified residue" description="Phosphothreonine; by HIPK2 and CDC2" evidence="17 18 21 22 23">
    <location>
        <position position="53"/>
    </location>
</feature>
<feature type="modified residue" description="Asymmetric dimethylarginine; by PRMT6; alternate" evidence="7">
    <location>
        <position position="58"/>
    </location>
</feature>
<feature type="modified residue" description="Omega-N-methylarginine; by PRMT6; alternate" evidence="7">
    <location>
        <position position="58"/>
    </location>
</feature>
<feature type="modified residue" description="Asymmetric dimethylarginine; by PRMT6; alternate" evidence="7">
    <location>
        <position position="60"/>
    </location>
</feature>
<feature type="modified residue" description="Omega-N-methylarginine; by PRMT6; alternate" evidence="7">
    <location>
        <position position="60"/>
    </location>
</feature>
<feature type="modified residue" description="Phosphothreonine; by HIPK2 and CDC2" evidence="5">
    <location>
        <position position="78"/>
    </location>
</feature>
<feature type="modified residue" description="Phosphoserine" evidence="6 15 16 20 21 22 23">
    <location>
        <position position="99"/>
    </location>
</feature>
<feature type="modified residue" description="Phosphoserine; by CK" evidence="6 15 16 20 21 22 23">
    <location>
        <position position="102"/>
    </location>
</feature>
<feature type="modified residue" description="Phosphoserine; by CK" evidence="6 15 16 20 21 23">
    <location>
        <position position="103"/>
    </location>
</feature>
<feature type="cross-link" description="Glycyl lysine isopeptide (Lys-Gly) (interchain with G-Cter in SUMO2); alternate" evidence="25">
    <location>
        <position position="15"/>
    </location>
</feature>
<feature type="splice variant" id="VSP_002182" description="In isoform HMG-Y." evidence="11 12 13">
    <location>
        <begin position="35"/>
        <end position="45"/>
    </location>
</feature>
<feature type="splice variant" id="VSP_018084" description="In isoform HMG-R." evidence="10">
    <original>NKGAAKTRKTTTTPGRKPRGRPKKLEKEEEEGISQESSEEEQ</original>
    <variation>KNWRRRKRRASRRSPRRRSSDPCVPPAPHWRSSFLLGLDSFAPLPPPPPLPQAHHHHRLWPPPPSSTCALTTTLHSTPAAAGLPWAEWGAVFPWPQFPAPPAHPRIHTCPPGQG</variation>
    <location>
        <begin position="66"/>
        <end position="107"/>
    </location>
</feature>
<feature type="mutagenesis site" description="Does not affect methylation by PRMT6." evidence="7">
    <original>R</original>
    <variation>A</variation>
    <location>
        <position position="26"/>
    </location>
</feature>
<feature type="mutagenesis site" description="Decreases methylation by PRMT6. Abolishes methylation by PRMT6; when associated with A-60." evidence="7">
    <original>R</original>
    <variation>A</variation>
    <location>
        <position position="58"/>
    </location>
</feature>
<feature type="mutagenesis site" description="Decreases methylation by PRMT6. Abolishes methylation by PRMT6; when associated with A-58." evidence="7">
    <original>R</original>
    <variation>A</variation>
    <location>
        <position position="60"/>
    </location>
</feature>
<feature type="sequence conflict" description="In Ref. 8; AA sequence." evidence="14" ref="8">
    <original>Q</original>
    <variation>QQQ</variation>
    <location>
        <position position="107"/>
    </location>
</feature>
<feature type="strand" evidence="26">
    <location>
        <begin position="53"/>
        <end position="55"/>
    </location>
</feature>
<feature type="modified residue" description="Phosphothreonine" evidence="8 17 22">
    <location sequence="P17096-2">
        <position position="42"/>
    </location>
</feature>
<feature type="modified residue" description="Phosphothreonine" evidence="8">
    <location sequence="P17096-2">
        <position position="67"/>
    </location>
</feature>
<comment type="function">
    <text>HMG-I/Y bind preferentially to the minor groove of A+T rich regions in double-stranded DNA. It is suggested that these proteins could function in nucleosome phasing and in the 3'-end processing of mRNA transcripts. They are also involved in the transcription regulation of genes containing, or in close proximity to A+T-rich regions.</text>
</comment>
<comment type="subunit">
    <text evidence="1">Interacts with HIPK2 (By similarity).</text>
</comment>
<comment type="interaction">
    <interactant intactId="EBI-746843">
        <id>P17096</id>
    </interactant>
    <interactant intactId="EBI-1052479">
        <id>P16402</id>
        <label>H1-3</label>
    </interactant>
    <organismsDiffer>false</organismsDiffer>
    <experiments>2</experiments>
</comment>
<comment type="interaction">
    <interactant intactId="EBI-746843">
        <id>P17096</id>
    </interactant>
    <interactant intactId="EBI-1642157">
        <id>Q8IUE6</id>
        <label>H2AC21</label>
    </interactant>
    <organismsDiffer>false</organismsDiffer>
    <experiments>3</experiments>
</comment>
<comment type="interaction">
    <interactant intactId="EBI-746843">
        <id>P17096</id>
    </interactant>
    <interactant intactId="EBI-1056125">
        <id>Q16778</id>
        <label>H2BC21</label>
    </interactant>
    <organismsDiffer>false</organismsDiffer>
    <experiments>2</experiments>
</comment>
<comment type="interaction">
    <interactant intactId="EBI-746843">
        <id>P17096</id>
    </interactant>
    <interactant intactId="EBI-302023">
        <id>P62805</id>
        <label>H4C9</label>
    </interactant>
    <organismsDiffer>false</organismsDiffer>
    <experiments>2</experiments>
</comment>
<comment type="interaction">
    <interactant intactId="EBI-746843">
        <id>P17096</id>
    </interactant>
    <interactant intactId="EBI-374840">
        <id>Q9Y5N6</id>
        <label>ORC6</label>
    </interactant>
    <organismsDiffer>false</organismsDiffer>
    <experiments>4</experiments>
</comment>
<comment type="interaction">
    <interactant intactId="EBI-746854">
        <id>P17096-1</id>
    </interactant>
    <interactant intactId="EBI-912440">
        <id>Q96LA8</id>
        <label>PRMT6</label>
    </interactant>
    <organismsDiffer>false</organismsDiffer>
    <experiments>4</experiments>
</comment>
<comment type="subcellular location">
    <subcellularLocation>
        <location>Nucleus</location>
    </subcellularLocation>
    <subcellularLocation>
        <location>Chromosome</location>
    </subcellularLocation>
</comment>
<comment type="alternative products">
    <event type="alternative splicing"/>
    <isoform>
        <id>P17096-1</id>
        <name>HMG-I</name>
        <name>HMGA1a</name>
        <sequence type="displayed"/>
    </isoform>
    <isoform>
        <id>P17096-2</id>
        <name>HMG-Y</name>
        <name>HMGA1b</name>
        <sequence type="described" ref="VSP_002182"/>
    </isoform>
    <isoform>
        <id>P17096-3</id>
        <name>HMG-R</name>
        <name>HMGA1c</name>
        <sequence type="described" ref="VSP_018084"/>
    </isoform>
</comment>
<comment type="PTM">
    <text evidence="5 6">Constitutively phosphorylated on two or three sites. Hyperphosphorylated at early stages of apoptosis, followed by dephosphorylation and methylation, which coincides with chromatin condensation. Isoforms HMG-I and HMG-Y can be phosphorylated by HIPK2. Phosphorylation of HMG-I at Ser-36, Thr-53 and Thr-78 and of HMG-Y at Thr-42 and Thr-67 by HIPK2 modulates DNA-binding affinity.</text>
</comment>
<comment type="PTM">
    <text>HMG-Y is not methylated.</text>
</comment>
<comment type="PTM">
    <text evidence="7">Methylation at Arg-58 is mutually exclusive with methylation at Arg-60.</text>
</comment>
<comment type="mass spectrometry">
    <molecule>Isoform HMG-I</molecule>
    <text>With 1 acetyl and 2 phosphate groups. The measured range is 2-107.</text>
</comment>
<comment type="mass spectrometry">
    <molecule>Isoform HMG-I</molecule>
    <text>With 1 acetyl and 3 phosphate groups. The measured range is 2-107.</text>
</comment>
<comment type="mass spectrometry">
    <molecule>Isoform HMG-I</molecule>
    <text>With 1 acetyl, 1 methyl and 2 phosphate groups. The measured range is 2-107.</text>
</comment>
<comment type="mass spectrometry">
    <molecule>Isoform HMG-I</molecule>
    <text>With 1 acetyl, 1 methyl and 3 phosphate groups. The measured range is 2-107.</text>
</comment>
<comment type="mass spectrometry">
    <molecule>Isoform HMG-I</molecule>
    <text>With 1 acetyl, 2 methyl and 2 phosphate groups. The measured range is 2-107.</text>
</comment>
<comment type="mass spectrometry">
    <molecule>Isoform HMG-I</molecule>
    <text>With 1 acetyl, 2 methyl and 3 phosphate groups. The measured range is 2-107.</text>
</comment>
<comment type="disease">
    <text evidence="4">A chromosomal aberration involving HMGA1 is found in pulmonary chondroid hamartoma. Translocation t(6;14)(p21;q23-24) with RAD51B.</text>
</comment>
<comment type="similarity">
    <text evidence="14">Belongs to the HMGA family.</text>
</comment>
<comment type="online information" name="Atlas of Genetics and Cytogenetics in Oncology and Haematology">
    <link uri="https://atlasgeneticsoncology.org/gene/221/HMGIY"/>
</comment>
<dbReference type="EMBL" id="X14957">
    <property type="protein sequence ID" value="CAA33080.1"/>
    <property type="molecule type" value="mRNA"/>
</dbReference>
<dbReference type="EMBL" id="X14958">
    <property type="protein sequence ID" value="CAA33081.1"/>
    <property type="molecule type" value="mRNA"/>
</dbReference>
<dbReference type="EMBL" id="M23614">
    <property type="protein sequence ID" value="AAA88072.1"/>
    <property type="molecule type" value="mRNA"/>
</dbReference>
<dbReference type="EMBL" id="M23615">
    <property type="protein sequence ID" value="AAA88073.1"/>
    <property type="molecule type" value="mRNA"/>
</dbReference>
<dbReference type="EMBL" id="M23616">
    <property type="protein sequence ID" value="AAA88074.1"/>
    <property type="molecule type" value="mRNA"/>
</dbReference>
<dbReference type="EMBL" id="M23617">
    <property type="protein sequence ID" value="AAA88075.1"/>
    <property type="molecule type" value="mRNA"/>
</dbReference>
<dbReference type="EMBL" id="M23618">
    <property type="protein sequence ID" value="AAA88076.1"/>
    <property type="molecule type" value="mRNA"/>
</dbReference>
<dbReference type="EMBL" id="M23619">
    <property type="protein sequence ID" value="AAA35998.1"/>
    <property type="molecule type" value="mRNA"/>
</dbReference>
<dbReference type="EMBL" id="L17131">
    <property type="protein sequence ID" value="AAB00145.1"/>
    <property type="molecule type" value="Genomic_DNA"/>
</dbReference>
<dbReference type="EMBL" id="AF176039">
    <property type="protein sequence ID" value="AAD53889.1"/>
    <property type="molecule type" value="mRNA"/>
</dbReference>
<dbReference type="EMBL" id="AL354740">
    <property type="status" value="NOT_ANNOTATED_CDS"/>
    <property type="molecule type" value="Genomic_DNA"/>
</dbReference>
<dbReference type="EMBL" id="BC004924">
    <property type="protein sequence ID" value="AAH04924.1"/>
    <property type="molecule type" value="mRNA"/>
</dbReference>
<dbReference type="EMBL" id="BC008832">
    <property type="protein sequence ID" value="AAH08832.1"/>
    <property type="molecule type" value="mRNA"/>
</dbReference>
<dbReference type="EMBL" id="BC063434">
    <property type="protein sequence ID" value="AAH63434.1"/>
    <property type="molecule type" value="mRNA"/>
</dbReference>
<dbReference type="EMBL" id="BC067083">
    <property type="protein sequence ID" value="AAH67083.1"/>
    <property type="molecule type" value="mRNA"/>
</dbReference>
<dbReference type="EMBL" id="BC071864">
    <property type="protein sequence ID" value="AAH71864.1"/>
    <property type="molecule type" value="mRNA"/>
</dbReference>
<dbReference type="CCDS" id="CCDS4788.1">
    <molecule id="P17096-2"/>
</dbReference>
<dbReference type="CCDS" id="CCDS4789.1">
    <molecule id="P17096-1"/>
</dbReference>
<dbReference type="PIR" id="A32794">
    <property type="entry name" value="A32794"/>
</dbReference>
<dbReference type="RefSeq" id="NP_001306006.1">
    <molecule id="P17096-2"/>
    <property type="nucleotide sequence ID" value="NM_001319077.2"/>
</dbReference>
<dbReference type="RefSeq" id="NP_001306007.1">
    <molecule id="P17096-1"/>
    <property type="nucleotide sequence ID" value="NM_001319078.2"/>
</dbReference>
<dbReference type="RefSeq" id="NP_001306008.1">
    <molecule id="P17096-1"/>
    <property type="nucleotide sequence ID" value="NM_001319079.2"/>
</dbReference>
<dbReference type="RefSeq" id="NP_001306009.1">
    <property type="nucleotide sequence ID" value="NM_001319080.1"/>
</dbReference>
<dbReference type="RefSeq" id="NP_001306010.1">
    <molecule id="P17096-1"/>
    <property type="nucleotide sequence ID" value="NM_001319081.2"/>
</dbReference>
<dbReference type="RefSeq" id="NP_001306011.1">
    <molecule id="P17096-1"/>
    <property type="nucleotide sequence ID" value="NM_001319082.2"/>
</dbReference>
<dbReference type="RefSeq" id="NP_002122.1">
    <molecule id="P17096-2"/>
    <property type="nucleotide sequence ID" value="NM_002131.4"/>
</dbReference>
<dbReference type="RefSeq" id="NP_665906.1">
    <molecule id="P17096-1"/>
    <property type="nucleotide sequence ID" value="NM_145899.3"/>
</dbReference>
<dbReference type="RefSeq" id="NP_665908.1">
    <molecule id="P17096-1"/>
    <property type="nucleotide sequence ID" value="NM_145901.3"/>
</dbReference>
<dbReference type="RefSeq" id="NP_665909.1">
    <molecule id="P17096-2"/>
    <property type="nucleotide sequence ID" value="NM_145902.3"/>
</dbReference>
<dbReference type="RefSeq" id="NP_665910.1">
    <molecule id="P17096-2"/>
    <property type="nucleotide sequence ID" value="NM_145903.3"/>
</dbReference>
<dbReference type="RefSeq" id="NP_665912.1">
    <molecule id="P17096-2"/>
    <property type="nucleotide sequence ID" value="NM_145905.3"/>
</dbReference>
<dbReference type="PDB" id="2EZD">
    <property type="method" value="NMR"/>
    <property type="chains" value="A=51-71"/>
</dbReference>
<dbReference type="PDB" id="2EZE">
    <property type="method" value="NMR"/>
    <property type="chains" value="A=51-75"/>
</dbReference>
<dbReference type="PDB" id="2EZF">
    <property type="method" value="NMR"/>
    <property type="chains" value="A=80-89"/>
</dbReference>
<dbReference type="PDB" id="2EZG">
    <property type="method" value="NMR"/>
    <property type="chains" value="A=80-89"/>
</dbReference>
<dbReference type="PDB" id="8CPG">
    <property type="method" value="X-ray"/>
    <property type="resolution" value="1.40 A"/>
    <property type="chains" value="G/H/I=23-31"/>
</dbReference>
<dbReference type="PDBsum" id="2EZD"/>
<dbReference type="PDBsum" id="2EZE"/>
<dbReference type="PDBsum" id="2EZF"/>
<dbReference type="PDBsum" id="2EZG"/>
<dbReference type="PDBsum" id="8CPG"/>
<dbReference type="BMRB" id="P17096"/>
<dbReference type="SMR" id="P17096"/>
<dbReference type="BioGRID" id="109402">
    <property type="interactions" value="429"/>
</dbReference>
<dbReference type="CORUM" id="P17096"/>
<dbReference type="DIP" id="DIP-29687N"/>
<dbReference type="FunCoup" id="P17096">
    <property type="interactions" value="1033"/>
</dbReference>
<dbReference type="IntAct" id="P17096">
    <property type="interactions" value="264"/>
</dbReference>
<dbReference type="MINT" id="P17096"/>
<dbReference type="STRING" id="9606.ENSP00000399888"/>
<dbReference type="GlyGen" id="P17096">
    <property type="glycosylation" value="1 site, 1 O-linked glycan (1 site)"/>
</dbReference>
<dbReference type="iPTMnet" id="P17096"/>
<dbReference type="PhosphoSitePlus" id="P17096"/>
<dbReference type="SwissPalm" id="P17096"/>
<dbReference type="BioMuta" id="HMGA1"/>
<dbReference type="DMDM" id="123377"/>
<dbReference type="jPOST" id="P17096"/>
<dbReference type="MassIVE" id="P17096"/>
<dbReference type="PaxDb" id="9606-ENSP00000399888"/>
<dbReference type="PeptideAtlas" id="P17096"/>
<dbReference type="ProteomicsDB" id="53453">
    <molecule id="P17096-1"/>
</dbReference>
<dbReference type="ProteomicsDB" id="53454">
    <molecule id="P17096-2"/>
</dbReference>
<dbReference type="ProteomicsDB" id="53455">
    <molecule id="P17096-3"/>
</dbReference>
<dbReference type="Pumba" id="P17096"/>
<dbReference type="TopDownProteomics" id="P17096-1">
    <molecule id="P17096-1"/>
</dbReference>
<dbReference type="TopDownProteomics" id="P17096-2">
    <molecule id="P17096-2"/>
</dbReference>
<dbReference type="TopDownProteomics" id="P17096-3">
    <molecule id="P17096-3"/>
</dbReference>
<dbReference type="Antibodypedia" id="29318">
    <property type="antibodies" value="401 antibodies from 39 providers"/>
</dbReference>
<dbReference type="DNASU" id="3159"/>
<dbReference type="Ensembl" id="ENST00000311487.9">
    <molecule id="P17096-1"/>
    <property type="protein sequence ID" value="ENSP00000308227.4"/>
    <property type="gene ID" value="ENSG00000137309.21"/>
</dbReference>
<dbReference type="Ensembl" id="ENST00000347617.10">
    <molecule id="P17096-2"/>
    <property type="protein sequence ID" value="ENSP00000288245.9"/>
    <property type="gene ID" value="ENSG00000137309.21"/>
</dbReference>
<dbReference type="Ensembl" id="ENST00000374116.3">
    <molecule id="P17096-2"/>
    <property type="protein sequence ID" value="ENSP00000363230.3"/>
    <property type="gene ID" value="ENSG00000137309.21"/>
</dbReference>
<dbReference type="Ensembl" id="ENST00000401473.7">
    <molecule id="P17096-2"/>
    <property type="protein sequence ID" value="ENSP00000385693.2"/>
    <property type="gene ID" value="ENSG00000137309.21"/>
</dbReference>
<dbReference type="Ensembl" id="ENST00000447654.5">
    <molecule id="P17096-1"/>
    <property type="protein sequence ID" value="ENSP00000399888.1"/>
    <property type="gene ID" value="ENSG00000137309.21"/>
</dbReference>
<dbReference type="GeneID" id="3159"/>
<dbReference type="KEGG" id="hsa:3159"/>
<dbReference type="MANE-Select" id="ENST00000311487.9">
    <property type="protein sequence ID" value="ENSP00000308227.4"/>
    <property type="RefSeq nucleotide sequence ID" value="NM_145899.3"/>
    <property type="RefSeq protein sequence ID" value="NP_665906.1"/>
</dbReference>
<dbReference type="UCSC" id="uc003oit.4">
    <molecule id="P17096-1"/>
    <property type="organism name" value="human"/>
</dbReference>
<dbReference type="AGR" id="HGNC:5010"/>
<dbReference type="CTD" id="3159"/>
<dbReference type="DisGeNET" id="3159"/>
<dbReference type="GeneCards" id="HMGA1"/>
<dbReference type="HGNC" id="HGNC:5010">
    <property type="gene designation" value="HMGA1"/>
</dbReference>
<dbReference type="HPA" id="ENSG00000137309">
    <property type="expression patterns" value="Tissue enhanced (esophagus)"/>
</dbReference>
<dbReference type="MalaCards" id="HMGA1"/>
<dbReference type="MIM" id="600701">
    <property type="type" value="gene"/>
</dbReference>
<dbReference type="neXtProt" id="NX_P17096"/>
<dbReference type="OpenTargets" id="ENSG00000137309"/>
<dbReference type="PharmGKB" id="PA35094"/>
<dbReference type="VEuPathDB" id="HostDB:ENSG00000137309"/>
<dbReference type="eggNOG" id="ENOG502S5JW">
    <property type="taxonomic scope" value="Eukaryota"/>
</dbReference>
<dbReference type="GeneTree" id="ENSGT00730000111329"/>
<dbReference type="HOGENOM" id="CLU_138888_0_0_1"/>
<dbReference type="InParanoid" id="P17096"/>
<dbReference type="OMA" id="FLFQFCE"/>
<dbReference type="PAN-GO" id="P17096">
    <property type="GO annotations" value="3 GO annotations based on evolutionary models"/>
</dbReference>
<dbReference type="TreeFam" id="TF351623"/>
<dbReference type="PathwayCommons" id="P17096"/>
<dbReference type="Reactome" id="R-HSA-162592">
    <property type="pathway name" value="Integration of provirus"/>
</dbReference>
<dbReference type="Reactome" id="R-HSA-164843">
    <property type="pathway name" value="2-LTR circle formation"/>
</dbReference>
<dbReference type="Reactome" id="R-HSA-175567">
    <property type="pathway name" value="Integration of viral DNA into host genomic DNA"/>
</dbReference>
<dbReference type="Reactome" id="R-HSA-177539">
    <property type="pathway name" value="Autointegration results in viral DNA circles"/>
</dbReference>
<dbReference type="Reactome" id="R-HSA-180689">
    <property type="pathway name" value="APOBEC3G mediated resistance to HIV-1 infection"/>
</dbReference>
<dbReference type="Reactome" id="R-HSA-180910">
    <property type="pathway name" value="Vpr-mediated nuclear import of PICs"/>
</dbReference>
<dbReference type="Reactome" id="R-HSA-2559584">
    <property type="pathway name" value="Formation of Senescence-Associated Heterochromatin Foci (SAHF)"/>
</dbReference>
<dbReference type="SignaLink" id="P17096"/>
<dbReference type="SIGNOR" id="P17096"/>
<dbReference type="BioGRID-ORCS" id="3159">
    <property type="hits" value="452 hits in 1086 CRISPR screens"/>
</dbReference>
<dbReference type="CD-CODE" id="91857CE7">
    <property type="entry name" value="Nucleolus"/>
</dbReference>
<dbReference type="CD-CODE" id="DEE660B4">
    <property type="entry name" value="Stress granule"/>
</dbReference>
<dbReference type="ChiTaRS" id="HMGA1">
    <property type="organism name" value="human"/>
</dbReference>
<dbReference type="GeneWiki" id="HMGA1"/>
<dbReference type="GenomeRNAi" id="3159"/>
<dbReference type="Pharos" id="P17096">
    <property type="development level" value="Tbio"/>
</dbReference>
<dbReference type="PRO" id="PR:P17096"/>
<dbReference type="Proteomes" id="UP000005640">
    <property type="component" value="Chromosome 6"/>
</dbReference>
<dbReference type="RNAct" id="P17096">
    <property type="molecule type" value="protein"/>
</dbReference>
<dbReference type="Bgee" id="ENSG00000137309">
    <property type="expression patterns" value="Expressed in lower esophagus mucosa and 204 other cell types or tissues"/>
</dbReference>
<dbReference type="ExpressionAtlas" id="P17096">
    <property type="expression patterns" value="baseline and differential"/>
</dbReference>
<dbReference type="GO" id="GO:0005829">
    <property type="term" value="C:cytosol"/>
    <property type="evidence" value="ECO:0000314"/>
    <property type="project" value="HPA"/>
</dbReference>
<dbReference type="GO" id="GO:0005925">
    <property type="term" value="C:focal adhesion"/>
    <property type="evidence" value="ECO:0007005"/>
    <property type="project" value="UniProtKB"/>
</dbReference>
<dbReference type="GO" id="GO:0031965">
    <property type="term" value="C:nuclear membrane"/>
    <property type="evidence" value="ECO:0000314"/>
    <property type="project" value="HPA"/>
</dbReference>
<dbReference type="GO" id="GO:0005654">
    <property type="term" value="C:nucleoplasm"/>
    <property type="evidence" value="ECO:0000314"/>
    <property type="project" value="HPA"/>
</dbReference>
<dbReference type="GO" id="GO:0005634">
    <property type="term" value="C:nucleus"/>
    <property type="evidence" value="ECO:0000314"/>
    <property type="project" value="UniProtKB"/>
</dbReference>
<dbReference type="GO" id="GO:0090575">
    <property type="term" value="C:RNA polymerase II transcription regulator complex"/>
    <property type="evidence" value="ECO:0000250"/>
    <property type="project" value="BHF-UCL"/>
</dbReference>
<dbReference type="GO" id="GO:0035985">
    <property type="term" value="C:senescence-associated heterochromatin focus"/>
    <property type="evidence" value="ECO:0000314"/>
    <property type="project" value="UniProtKB"/>
</dbReference>
<dbReference type="GO" id="GO:0005667">
    <property type="term" value="C:transcription regulator complex"/>
    <property type="evidence" value="ECO:0000304"/>
    <property type="project" value="UniProtKB"/>
</dbReference>
<dbReference type="GO" id="GO:0051575">
    <property type="term" value="F:5'-deoxyribose-5-phosphate lyase activity"/>
    <property type="evidence" value="ECO:0000314"/>
    <property type="project" value="UniProtKB"/>
</dbReference>
<dbReference type="GO" id="GO:0003682">
    <property type="term" value="F:chromatin binding"/>
    <property type="evidence" value="ECO:0000250"/>
    <property type="project" value="BHF-UCL"/>
</dbReference>
<dbReference type="GO" id="GO:0000987">
    <property type="term" value="F:cis-regulatory region sequence-specific DNA binding"/>
    <property type="evidence" value="ECO:0000314"/>
    <property type="project" value="CAFA"/>
</dbReference>
<dbReference type="GO" id="GO:0003677">
    <property type="term" value="F:DNA binding"/>
    <property type="evidence" value="ECO:0000314"/>
    <property type="project" value="DisProt"/>
</dbReference>
<dbReference type="GO" id="GO:0008301">
    <property type="term" value="F:DNA binding, bending"/>
    <property type="evidence" value="ECO:0000269"/>
    <property type="project" value="DisProt"/>
</dbReference>
<dbReference type="GO" id="GO:0003906">
    <property type="term" value="F:DNA-(apurinic or apyrimidinic site) endonuclease activity"/>
    <property type="evidence" value="ECO:0000314"/>
    <property type="project" value="UniProtKB"/>
</dbReference>
<dbReference type="GO" id="GO:0019899">
    <property type="term" value="F:enzyme binding"/>
    <property type="evidence" value="ECO:0000353"/>
    <property type="project" value="UniProtKB"/>
</dbReference>
<dbReference type="GO" id="GO:0003680">
    <property type="term" value="F:minor groove of adenine-thymine-rich DNA binding"/>
    <property type="evidence" value="ECO:0000314"/>
    <property type="project" value="CAFA"/>
</dbReference>
<dbReference type="GO" id="GO:0060090">
    <property type="term" value="F:molecular adaptor activity"/>
    <property type="evidence" value="ECO:0000314"/>
    <property type="project" value="DisProt"/>
</dbReference>
<dbReference type="GO" id="GO:0140677">
    <property type="term" value="F:molecular function activator activity"/>
    <property type="evidence" value="ECO:0000315"/>
    <property type="project" value="DisProt"/>
</dbReference>
<dbReference type="GO" id="GO:0042974">
    <property type="term" value="F:nuclear retinoic acid receptor binding"/>
    <property type="evidence" value="ECO:0000314"/>
    <property type="project" value="UniProtKB"/>
</dbReference>
<dbReference type="GO" id="GO:0046965">
    <property type="term" value="F:nuclear retinoid X receptor binding"/>
    <property type="evidence" value="ECO:0000314"/>
    <property type="project" value="UniProtKB"/>
</dbReference>
<dbReference type="GO" id="GO:0042975">
    <property type="term" value="F:peroxisome proliferator activated receptor binding"/>
    <property type="evidence" value="ECO:0000314"/>
    <property type="project" value="UniProtKB"/>
</dbReference>
<dbReference type="GO" id="GO:0003723">
    <property type="term" value="F:RNA binding"/>
    <property type="evidence" value="ECO:0000353"/>
    <property type="project" value="DisProt"/>
</dbReference>
<dbReference type="GO" id="GO:0000978">
    <property type="term" value="F:RNA polymerase II cis-regulatory region sequence-specific DNA binding"/>
    <property type="evidence" value="ECO:0000250"/>
    <property type="project" value="ARUK-UCL"/>
</dbReference>
<dbReference type="GO" id="GO:0030527">
    <property type="term" value="F:structural constituent of chromatin"/>
    <property type="evidence" value="ECO:0000304"/>
    <property type="project" value="ARUK-UCL"/>
</dbReference>
<dbReference type="GO" id="GO:0003713">
    <property type="term" value="F:transcription coactivator activity"/>
    <property type="evidence" value="ECO:0000315"/>
    <property type="project" value="UniProtKB"/>
</dbReference>
<dbReference type="GO" id="GO:0003712">
    <property type="term" value="F:transcription coregulator activity"/>
    <property type="evidence" value="ECO:0000318"/>
    <property type="project" value="GO_Central"/>
</dbReference>
<dbReference type="GO" id="GO:0001221">
    <property type="term" value="F:transcription coregulator binding"/>
    <property type="evidence" value="ECO:0000314"/>
    <property type="project" value="UniProtKB"/>
</dbReference>
<dbReference type="GO" id="GO:0006284">
    <property type="term" value="P:base-excision repair"/>
    <property type="evidence" value="ECO:0000314"/>
    <property type="project" value="UniProtKB"/>
</dbReference>
<dbReference type="GO" id="GO:0008285">
    <property type="term" value="P:negative regulation of cell population proliferation"/>
    <property type="evidence" value="ECO:0000315"/>
    <property type="project" value="UniProtKB"/>
</dbReference>
<dbReference type="GO" id="GO:0045892">
    <property type="term" value="P:negative regulation of DNA-templated transcription"/>
    <property type="evidence" value="ECO:0000315"/>
    <property type="project" value="UniProtKB"/>
</dbReference>
<dbReference type="GO" id="GO:0006337">
    <property type="term" value="P:nucleosome disassembly"/>
    <property type="evidence" value="ECO:0000304"/>
    <property type="project" value="UniProtKB"/>
</dbReference>
<dbReference type="GO" id="GO:0090402">
    <property type="term" value="P:oncogene-induced cell senescence"/>
    <property type="evidence" value="ECO:0000314"/>
    <property type="project" value="UniProtKB"/>
</dbReference>
<dbReference type="GO" id="GO:0045893">
    <property type="term" value="P:positive regulation of DNA-templated transcription"/>
    <property type="evidence" value="ECO:0000315"/>
    <property type="project" value="UniProtKB"/>
</dbReference>
<dbReference type="GO" id="GO:0045944">
    <property type="term" value="P:positive regulation of transcription by RNA polymerase II"/>
    <property type="evidence" value="ECO:0000250"/>
    <property type="project" value="BHF-UCL"/>
</dbReference>
<dbReference type="GO" id="GO:0006355">
    <property type="term" value="P:regulation of DNA-templated transcription"/>
    <property type="evidence" value="ECO:0000318"/>
    <property type="project" value="GO_Central"/>
</dbReference>
<dbReference type="DisProt" id="DP00040"/>
<dbReference type="IDEAL" id="IID00145"/>
<dbReference type="InterPro" id="IPR017956">
    <property type="entry name" value="AT_hook_DNA-bd_motif"/>
</dbReference>
<dbReference type="InterPro" id="IPR000116">
    <property type="entry name" value="HMGA"/>
</dbReference>
<dbReference type="InterPro" id="IPR000637">
    <property type="entry name" value="HMGI/Y_DNA-bd_CS"/>
</dbReference>
<dbReference type="PANTHER" id="PTHR23341:SF1">
    <property type="entry name" value="HIGH MOBILITY GROUP PROTEIN HMG-I_HMG-Y"/>
    <property type="match status" value="1"/>
</dbReference>
<dbReference type="PANTHER" id="PTHR23341">
    <property type="entry name" value="HIGH MOBILITY GROUP PROTEINS HMG-A AND C"/>
    <property type="match status" value="1"/>
</dbReference>
<dbReference type="PRINTS" id="PR00929">
    <property type="entry name" value="ATHOOK"/>
</dbReference>
<dbReference type="PRINTS" id="PR00930">
    <property type="entry name" value="HIGHMOBLTYIY"/>
</dbReference>
<dbReference type="SMART" id="SM00384">
    <property type="entry name" value="AT_hook"/>
    <property type="match status" value="3"/>
</dbReference>
<dbReference type="PROSITE" id="PS00354">
    <property type="entry name" value="HMGI_Y"/>
    <property type="match status" value="3"/>
</dbReference>
<sequence>MSESSSKSSQPLASKQEKDGTEKRGRGRPRKQPPVSPGTALVGSQKEPSEVPTPKRPRGRPKGSKNKGAAKTRKTTTTPGRKPRGRPKKLEKEEEEGISQESSEEEQ</sequence>
<name>HMGA1_HUMAN</name>
<accession>P17096</accession>
<accession>P10910</accession>
<accession>Q5T6U9</accession>
<accession>Q9UKB0</accession>